<dbReference type="EC" id="3.4.-.-" evidence="6"/>
<dbReference type="EMBL" id="GG692419">
    <property type="protein sequence ID" value="EER45038.1"/>
    <property type="molecule type" value="Genomic_DNA"/>
</dbReference>
<dbReference type="SMR" id="C6H1N5"/>
<dbReference type="STRING" id="544712.C6H1N5"/>
<dbReference type="VEuPathDB" id="FungiDB:HCDG_00617"/>
<dbReference type="eggNOG" id="KOG2194">
    <property type="taxonomic scope" value="Eukaryota"/>
</dbReference>
<dbReference type="HOGENOM" id="CLU_006412_1_0_1"/>
<dbReference type="OMA" id="TPWPVTI"/>
<dbReference type="OrthoDB" id="9046at299071"/>
<dbReference type="Proteomes" id="UP000002624">
    <property type="component" value="Unassembled WGS sequence"/>
</dbReference>
<dbReference type="GO" id="GO:0005774">
    <property type="term" value="C:vacuolar membrane"/>
    <property type="evidence" value="ECO:0007669"/>
    <property type="project" value="UniProtKB-SubCell"/>
</dbReference>
<dbReference type="GO" id="GO:0046872">
    <property type="term" value="F:metal ion binding"/>
    <property type="evidence" value="ECO:0007669"/>
    <property type="project" value="UniProtKB-KW"/>
</dbReference>
<dbReference type="GO" id="GO:0008235">
    <property type="term" value="F:metalloexopeptidase activity"/>
    <property type="evidence" value="ECO:0007669"/>
    <property type="project" value="InterPro"/>
</dbReference>
<dbReference type="GO" id="GO:0006508">
    <property type="term" value="P:proteolysis"/>
    <property type="evidence" value="ECO:0007669"/>
    <property type="project" value="UniProtKB-KW"/>
</dbReference>
<dbReference type="CDD" id="cd03875">
    <property type="entry name" value="M28_Fxna_like"/>
    <property type="match status" value="1"/>
</dbReference>
<dbReference type="FunFam" id="3.40.630.10:FF:000057">
    <property type="entry name" value="Vacuolar membrane protease"/>
    <property type="match status" value="1"/>
</dbReference>
<dbReference type="Gene3D" id="3.40.630.10">
    <property type="entry name" value="Zn peptidases"/>
    <property type="match status" value="1"/>
</dbReference>
<dbReference type="InterPro" id="IPR048024">
    <property type="entry name" value="Fxna-like_M28_dom"/>
</dbReference>
<dbReference type="InterPro" id="IPR045175">
    <property type="entry name" value="M28_fam"/>
</dbReference>
<dbReference type="InterPro" id="IPR007484">
    <property type="entry name" value="Peptidase_M28"/>
</dbReference>
<dbReference type="InterPro" id="IPR053975">
    <property type="entry name" value="PFF1_C"/>
</dbReference>
<dbReference type="InterPro" id="IPR053976">
    <property type="entry name" value="PFF1_TM"/>
</dbReference>
<dbReference type="PANTHER" id="PTHR12147">
    <property type="entry name" value="METALLOPEPTIDASE M28 FAMILY MEMBER"/>
    <property type="match status" value="1"/>
</dbReference>
<dbReference type="PANTHER" id="PTHR12147:SF58">
    <property type="entry name" value="VACUOLAR MEMBRANE PROTEASE"/>
    <property type="match status" value="1"/>
</dbReference>
<dbReference type="Pfam" id="PF04389">
    <property type="entry name" value="Peptidase_M28"/>
    <property type="match status" value="1"/>
</dbReference>
<dbReference type="Pfam" id="PF22250">
    <property type="entry name" value="PFF1_C"/>
    <property type="match status" value="1"/>
</dbReference>
<dbReference type="Pfam" id="PF22251">
    <property type="entry name" value="PFF1_TM"/>
    <property type="match status" value="1"/>
</dbReference>
<dbReference type="SUPFAM" id="SSF53187">
    <property type="entry name" value="Zn-dependent exopeptidases"/>
    <property type="match status" value="1"/>
</dbReference>
<accession>C6H1N5</accession>
<feature type="chain" id="PRO_0000411690" description="Vacuolar membrane protease">
    <location>
        <begin position="1"/>
        <end position="920"/>
    </location>
</feature>
<feature type="topological domain" description="Cytoplasmic" evidence="1">
    <location>
        <begin position="1"/>
        <end position="20"/>
    </location>
</feature>
<feature type="transmembrane region" description="Helical; Name=1" evidence="3">
    <location>
        <begin position="21"/>
        <end position="41"/>
    </location>
</feature>
<feature type="topological domain" description="Vacuolar" evidence="1">
    <location>
        <begin position="42"/>
        <end position="378"/>
    </location>
</feature>
<feature type="transmembrane region" description="Helical; Name=2" evidence="3">
    <location>
        <begin position="379"/>
        <end position="399"/>
    </location>
</feature>
<feature type="topological domain" description="Cytoplasmic" evidence="1">
    <location>
        <begin position="400"/>
        <end position="433"/>
    </location>
</feature>
<feature type="transmembrane region" description="Helical; Name=3" evidence="3">
    <location>
        <begin position="434"/>
        <end position="454"/>
    </location>
</feature>
<feature type="topological domain" description="Vacuolar" evidence="1">
    <location>
        <begin position="455"/>
        <end position="463"/>
    </location>
</feature>
<feature type="transmembrane region" description="Helical; Name=4" evidence="3">
    <location>
        <begin position="464"/>
        <end position="484"/>
    </location>
</feature>
<feature type="topological domain" description="Cytoplasmic" evidence="1">
    <location>
        <begin position="485"/>
        <end position="495"/>
    </location>
</feature>
<feature type="transmembrane region" description="Helical; Name=5" evidence="3">
    <location>
        <begin position="496"/>
        <end position="516"/>
    </location>
</feature>
<feature type="topological domain" description="Vacuolar" evidence="1">
    <location>
        <begin position="517"/>
        <end position="520"/>
    </location>
</feature>
<feature type="transmembrane region" description="Helical; Name=6" evidence="3">
    <location>
        <begin position="521"/>
        <end position="541"/>
    </location>
</feature>
<feature type="topological domain" description="Cytoplasmic" evidence="1">
    <location>
        <begin position="542"/>
        <end position="659"/>
    </location>
</feature>
<feature type="transmembrane region" description="Helical; Name=7" evidence="3">
    <location>
        <begin position="660"/>
        <end position="680"/>
    </location>
</feature>
<feature type="topological domain" description="Vacuolar" evidence="1">
    <location>
        <begin position="681"/>
        <end position="693"/>
    </location>
</feature>
<feature type="transmembrane region" description="Helical; Name=8" evidence="3">
    <location>
        <begin position="694"/>
        <end position="714"/>
    </location>
</feature>
<feature type="topological domain" description="Cytoplasmic" evidence="1">
    <location>
        <begin position="715"/>
        <end position="720"/>
    </location>
</feature>
<feature type="transmembrane region" description="Helical; Name=9" evidence="3">
    <location>
        <begin position="721"/>
        <end position="741"/>
    </location>
</feature>
<feature type="topological domain" description="Vacuolar" evidence="1">
    <location>
        <begin position="742"/>
        <end position="920"/>
    </location>
</feature>
<feature type="region of interest" description="Disordered" evidence="5">
    <location>
        <begin position="556"/>
        <end position="605"/>
    </location>
</feature>
<feature type="compositionally biased region" description="Low complexity" evidence="5">
    <location>
        <begin position="559"/>
        <end position="575"/>
    </location>
</feature>
<feature type="active site" description="Proton acceptor" evidence="2">
    <location>
        <position position="221"/>
    </location>
</feature>
<feature type="binding site" evidence="2">
    <location>
        <position position="175"/>
    </location>
    <ligand>
        <name>Zn(2+)</name>
        <dbReference type="ChEBI" id="CHEBI:29105"/>
        <label>1</label>
        <note>catalytic</note>
    </ligand>
</feature>
<feature type="binding site" evidence="2">
    <location>
        <position position="187"/>
    </location>
    <ligand>
        <name>Zn(2+)</name>
        <dbReference type="ChEBI" id="CHEBI:29105"/>
        <label>1</label>
        <note>catalytic</note>
    </ligand>
</feature>
<feature type="binding site" evidence="2">
    <location>
        <position position="187"/>
    </location>
    <ligand>
        <name>Zn(2+)</name>
        <dbReference type="ChEBI" id="CHEBI:29105"/>
        <label>2</label>
        <note>catalytic</note>
    </ligand>
</feature>
<feature type="binding site" evidence="2">
    <location>
        <position position="222"/>
    </location>
    <ligand>
        <name>Zn(2+)</name>
        <dbReference type="ChEBI" id="CHEBI:29105"/>
        <label>2</label>
        <note>catalytic</note>
    </ligand>
</feature>
<feature type="binding site" evidence="2">
    <location>
        <position position="247"/>
    </location>
    <ligand>
        <name>Zn(2+)</name>
        <dbReference type="ChEBI" id="CHEBI:29105"/>
        <label>1</label>
        <note>catalytic</note>
    </ligand>
</feature>
<feature type="binding site" evidence="2">
    <location>
        <position position="306"/>
    </location>
    <ligand>
        <name>Zn(2+)</name>
        <dbReference type="ChEBI" id="CHEBI:29105"/>
        <label>2</label>
        <note>catalytic</note>
    </ligand>
</feature>
<feature type="site" description="Transition state stabilizer" evidence="2">
    <location>
        <position position="305"/>
    </location>
</feature>
<feature type="glycosylation site" description="N-linked (GlcNAc...) asparagine" evidence="4">
    <location>
        <position position="53"/>
    </location>
</feature>
<feature type="glycosylation site" description="N-linked (GlcNAc...) asparagine" evidence="4">
    <location>
        <position position="116"/>
    </location>
</feature>
<feature type="glycosylation site" description="N-linked (GlcNAc...) asparagine" evidence="4">
    <location>
        <position position="119"/>
    </location>
</feature>
<feature type="glycosylation site" description="N-linked (GlcNAc...) asparagine" evidence="4">
    <location>
        <position position="238"/>
    </location>
</feature>
<feature type="glycosylation site" description="N-linked (GlcNAc...) asparagine" evidence="4">
    <location>
        <position position="760"/>
    </location>
</feature>
<feature type="glycosylation site" description="N-linked (GlcNAc...) asparagine" evidence="4">
    <location>
        <position position="788"/>
    </location>
</feature>
<feature type="glycosylation site" description="N-linked (GlcNAc...) asparagine" evidence="4">
    <location>
        <position position="832"/>
    </location>
</feature>
<organism>
    <name type="scientific">Ajellomyces capsulatus (strain H143)</name>
    <name type="common">Darling's disease fungus</name>
    <name type="synonym">Histoplasma capsulatum</name>
    <dbReference type="NCBI Taxonomy" id="544712"/>
    <lineage>
        <taxon>Eukaryota</taxon>
        <taxon>Fungi</taxon>
        <taxon>Dikarya</taxon>
        <taxon>Ascomycota</taxon>
        <taxon>Pezizomycotina</taxon>
        <taxon>Eurotiomycetes</taxon>
        <taxon>Eurotiomycetidae</taxon>
        <taxon>Onygenales</taxon>
        <taxon>Ajellomycetaceae</taxon>
        <taxon>Histoplasma</taxon>
    </lineage>
</organism>
<name>PFF1_AJECH</name>
<comment type="function">
    <text evidence="1">May be involved in vacuolar sorting and osmoregulation.</text>
</comment>
<comment type="cofactor">
    <cofactor evidence="2">
        <name>Zn(2+)</name>
        <dbReference type="ChEBI" id="CHEBI:29105"/>
    </cofactor>
    <text evidence="2">Binds 2 Zn(2+) ions per subunit.</text>
</comment>
<comment type="subcellular location">
    <subcellularLocation>
        <location evidence="1">Vacuole membrane</location>
        <topology evidence="3">Multi-pass membrane protein</topology>
    </subcellularLocation>
</comment>
<comment type="similarity">
    <text evidence="6">Belongs to the peptidase M28 family.</text>
</comment>
<reference key="1">
    <citation type="submission" date="2009-05" db="EMBL/GenBank/DDBJ databases">
        <title>The genome sequence of Ajellomyces capsulatus strain H143.</title>
        <authorList>
            <person name="Champion M."/>
            <person name="Cuomo C.A."/>
            <person name="Ma L.-J."/>
            <person name="Henn M.R."/>
            <person name="Sil A."/>
            <person name="Goldman B."/>
            <person name="Young S.K."/>
            <person name="Kodira C.D."/>
            <person name="Zeng Q."/>
            <person name="Koehrsen M."/>
            <person name="Alvarado L."/>
            <person name="Berlin A.M."/>
            <person name="Borenstein D."/>
            <person name="Chen Z."/>
            <person name="Engels R."/>
            <person name="Freedman E."/>
            <person name="Gellesch M."/>
            <person name="Goldberg J."/>
            <person name="Griggs A."/>
            <person name="Gujja S."/>
            <person name="Heiman D.I."/>
            <person name="Hepburn T.A."/>
            <person name="Howarth C."/>
            <person name="Jen D."/>
            <person name="Larson L."/>
            <person name="Lewis B."/>
            <person name="Mehta T."/>
            <person name="Park D."/>
            <person name="Pearson M."/>
            <person name="Roberts A."/>
            <person name="Saif S."/>
            <person name="Shea T.D."/>
            <person name="Shenoy N."/>
            <person name="Sisk P."/>
            <person name="Stolte C."/>
            <person name="Sykes S."/>
            <person name="Walk T."/>
            <person name="White J."/>
            <person name="Yandava C."/>
            <person name="Klein B."/>
            <person name="McEwen J.G."/>
            <person name="Puccia R."/>
            <person name="Goldman G.H."/>
            <person name="Felipe M.S."/>
            <person name="Nino-Vega G."/>
            <person name="San-Blas G."/>
            <person name="Taylor J.W."/>
            <person name="Mendoza L."/>
            <person name="Galagan J.E."/>
            <person name="Nusbaum C."/>
            <person name="Birren B.W."/>
        </authorList>
    </citation>
    <scope>NUCLEOTIDE SEQUENCE [LARGE SCALE GENOMIC DNA]</scope>
    <source>
        <strain>H143</strain>
    </source>
</reference>
<gene>
    <name type="ORF">HCDG_00617</name>
</gene>
<sequence>MASSRAQRFNPIAFTPWPVTCITTIVYLALLIPILVINLVVPSAPETNPKGVNLTEAWRDLQHLTGGFHPYNSRRNDEVHEWLLSRINSIIRPTVEAGQRSSATDNLPEVFVFDDNRSNLTYSNGGVGKTSIVGVYFESTNIIVYIRGSEDDSENWRERSNGKPKGKGGVLVNAHYDSVSTGYGATDDGIGVVSLLQLLRYFTTPGNNPRKGLVLLFNNGEEDYLNGAHVFSQHPLSNFTHTFLNLEDTEVTRFYGNTKHPFGSVLAADGFKMGLLRSQTDYVVFNGILGLRGLDLAFIAPRSRYHTDQDDTRHTSIDSLWHMLSASIGTTEGLVSYTGMDFDGKSKGQNKVNSGAGSLGVWFDMFGTAFAVFRLHTLFAISVALLVIAPLVIFITSVILSKTDRMYLFSMSKSLEGTGDQVSLRGLRGFSRTPIILVIATTIPICLAYLLEKVNPYIVHSSQFSVWSMMFSAWIFLAWFLACAADFFRPSALHRAYSYTWIFVATWIMLVINTVYANQKGIAAGYFLLFYFAGAFLATWISYLELFALPRKGDFARQTTGRRPSSLSSRLLTSSADELRSNASPSTAEFPGAAGEDTDPTESTSLLRGQRTTFANYRTSGPGGAAEETDEREDINKGGTFEHEQSWSWTLPRWTWVLQLLLLAPIVLILVGQLALFLTASMCQVGSDGVSTFVVYLACAVFTTLLCIPLFPLIHRFTYHIPTFLFLVFIGTLIYNLVAFPFSPANRLKTFFIQEVDLDNGSSTVSLTGIQPYLTEAINSIPSAAGQNITCDKTTPFGMLERCSWSGLSPNVLGQGRERDTEIVPDKWITYNITKTVGKNKARIEISGRNTRACKLKFDRAVANFQVSGSAVDHRMPPTSRQGPGVIPALDEVRLYAPSWIAISKAADGLVEASHSFTIQ</sequence>
<keyword id="KW-0325">Glycoprotein</keyword>
<keyword id="KW-0378">Hydrolase</keyword>
<keyword id="KW-0472">Membrane</keyword>
<keyword id="KW-0479">Metal-binding</keyword>
<keyword id="KW-0482">Metalloprotease</keyword>
<keyword id="KW-0645">Protease</keyword>
<keyword id="KW-1185">Reference proteome</keyword>
<keyword id="KW-0812">Transmembrane</keyword>
<keyword id="KW-1133">Transmembrane helix</keyword>
<keyword id="KW-0926">Vacuole</keyword>
<keyword id="KW-0862">Zinc</keyword>
<evidence type="ECO:0000250" key="1">
    <source>
        <dbReference type="UniProtKB" id="P38244"/>
    </source>
</evidence>
<evidence type="ECO:0000250" key="2">
    <source>
        <dbReference type="UniProtKB" id="P80561"/>
    </source>
</evidence>
<evidence type="ECO:0000255" key="3"/>
<evidence type="ECO:0000255" key="4">
    <source>
        <dbReference type="PROSITE-ProRule" id="PRU00498"/>
    </source>
</evidence>
<evidence type="ECO:0000256" key="5">
    <source>
        <dbReference type="SAM" id="MobiDB-lite"/>
    </source>
</evidence>
<evidence type="ECO:0000305" key="6"/>
<protein>
    <recommendedName>
        <fullName evidence="1">Vacuolar membrane protease</fullName>
        <ecNumber evidence="6">3.4.-.-</ecNumber>
    </recommendedName>
    <alternativeName>
        <fullName evidence="1">FXNA-related family protease 1</fullName>
    </alternativeName>
</protein>
<proteinExistence type="inferred from homology"/>